<feature type="chain" id="PRO_0000353277" description="DNA-directed RNA polymerase subunit beta'">
    <location>
        <begin position="1"/>
        <end position="1412"/>
    </location>
</feature>
<feature type="binding site" evidence="1">
    <location>
        <position position="71"/>
    </location>
    <ligand>
        <name>Zn(2+)</name>
        <dbReference type="ChEBI" id="CHEBI:29105"/>
        <label>1</label>
    </ligand>
</feature>
<feature type="binding site" evidence="1">
    <location>
        <position position="73"/>
    </location>
    <ligand>
        <name>Zn(2+)</name>
        <dbReference type="ChEBI" id="CHEBI:29105"/>
        <label>1</label>
    </ligand>
</feature>
<feature type="binding site" evidence="1">
    <location>
        <position position="86"/>
    </location>
    <ligand>
        <name>Zn(2+)</name>
        <dbReference type="ChEBI" id="CHEBI:29105"/>
        <label>1</label>
    </ligand>
</feature>
<feature type="binding site" evidence="1">
    <location>
        <position position="89"/>
    </location>
    <ligand>
        <name>Zn(2+)</name>
        <dbReference type="ChEBI" id="CHEBI:29105"/>
        <label>1</label>
    </ligand>
</feature>
<feature type="binding site" evidence="1">
    <location>
        <position position="461"/>
    </location>
    <ligand>
        <name>Mg(2+)</name>
        <dbReference type="ChEBI" id="CHEBI:18420"/>
    </ligand>
</feature>
<feature type="binding site" evidence="1">
    <location>
        <position position="463"/>
    </location>
    <ligand>
        <name>Mg(2+)</name>
        <dbReference type="ChEBI" id="CHEBI:18420"/>
    </ligand>
</feature>
<feature type="binding site" evidence="1">
    <location>
        <position position="465"/>
    </location>
    <ligand>
        <name>Mg(2+)</name>
        <dbReference type="ChEBI" id="CHEBI:18420"/>
    </ligand>
</feature>
<feature type="binding site" evidence="1">
    <location>
        <position position="815"/>
    </location>
    <ligand>
        <name>Zn(2+)</name>
        <dbReference type="ChEBI" id="CHEBI:29105"/>
        <label>2</label>
    </ligand>
</feature>
<feature type="binding site" evidence="1">
    <location>
        <position position="889"/>
    </location>
    <ligand>
        <name>Zn(2+)</name>
        <dbReference type="ChEBI" id="CHEBI:29105"/>
        <label>2</label>
    </ligand>
</feature>
<feature type="binding site" evidence="1">
    <location>
        <position position="896"/>
    </location>
    <ligand>
        <name>Zn(2+)</name>
        <dbReference type="ChEBI" id="CHEBI:29105"/>
        <label>2</label>
    </ligand>
</feature>
<feature type="binding site" evidence="1">
    <location>
        <position position="899"/>
    </location>
    <ligand>
        <name>Zn(2+)</name>
        <dbReference type="ChEBI" id="CHEBI:29105"/>
        <label>2</label>
    </ligand>
</feature>
<protein>
    <recommendedName>
        <fullName evidence="1">DNA-directed RNA polymerase subunit beta'</fullName>
        <shortName evidence="1">RNAP subunit beta'</shortName>
        <ecNumber evidence="1">2.7.7.6</ecNumber>
    </recommendedName>
    <alternativeName>
        <fullName evidence="1">RNA polymerase subunit beta'</fullName>
    </alternativeName>
    <alternativeName>
        <fullName evidence="1">Transcriptase subunit beta'</fullName>
    </alternativeName>
</protein>
<sequence>MKDLVKFLKAQSKSNDDFDVIKIGLASPDKIRSWSFGEVKKPETINYRTFKPERDGLFCARIFGPVKDYECLCGKYKRLRHRGVICEKCGVEVTQTKVRRDRMGHIELACPVAHIWFLKSLPSRIGLILDMPLRDIERVLYFESYVVTEPGMTDLEKNQLLTEEQFLDAEERWGDEFEAKMGAEGIQALLRDMDLEHQCEMMREELQETNSETKRKKITKRLKLLEAFQQSGNKPEWMVMTVLPVLPPDLRPLVPLDGGRFATSDLNDLYRRVINRNNRLKRLLDLVAPDIIVRNEKRMLQESVDALLDNGRRGRAITGSNKRPLKSLADMIKGKQGRFRQNLLGKRVDYSGRSVITVGPYLHLHQCGLPKKMALELFRPFIYSKLESRGIASTIKAAKKMVEREEPIVWDILAEVIREHPILLNRAPTLHRLGIQAFEPILIEGKAIQLHPLVCAAFNADFDGDQMAVHVPLTLEAQLEARALMMSTNNVLSPASGDPIIVPSQDVVLGLYYMTREKVNAKGEGMYFLDPREAEKAYRTGQAELHARVKVRITEHVKNEAGELVAETKLLDTTIGRAILWMIAPKGMPFKVFNQTLGKKAISKLINESYRRLGLKESVILADQIMYTGFAYAARSGASVGIDDMVIPAQKHEIIRAAEAEVAEIQEQFNSGLVTAGERYNKVIDIWAAANERVAKAMMENLSTEEVINREGNPEKQASFNSIFMMADSGARGSAAQIRQLAGMRGLMARPDGSIIETPITANFREGLNVLQYFISTHGARKGLADTALKTANSGYLTRRLVDVAQDLVITEDDCGTHEGIVMTPLIEGGDVKEALRDRVLGRVVAEDVLKPGTEEVLIPRNTLIDEKWCDVIDAESVDVIKVRSVVTCNTDFGVCAKCYGRDLARGHLINQGEAVGVIAAQSIGEPGTQLTMRTFHIGGAASAAAKESSIQVKNAGTIKLTNAKFVTNKEGKIVLTSRNTELTVIDTFGRTKENYKVPYGAVLSKNDGAEVAVGEVVANWDPHTMPVISEVSGRIQFSDIVDGLTVTRQTDELTGLSSIVVQDVGERATAGKDLRPALRLVDAQGNDILIPSTDVAAQYFLPGKAIVTLDDGAEIEVGEALARIPQESVGTKDITGGLPRVADLFEARKPKEPAILAEISGIVSFGKETKGKRRLVITPAEGEAFEEMIPKWRQLNVFEGEMVQRGDVISDGAETPHDILRLRGVHAVTDYIVNEVQEVYRLQGVKINDKHIEVIVRQMLRKAVITNAYDSEFLEGEQVEVSRVKIANRKRAEEGKPLVEFERELLGITKASLATESFISAASFQETTRVLTEAAVAGKRDELRGLKENVIVGRLIPAGTGFAYHQNRAKKRNQQEQAVAFEAPVEKLTGSQPMLISKRNSNSLQTMQLKA</sequence>
<dbReference type="EC" id="2.7.7.6" evidence="1"/>
<dbReference type="EMBL" id="CP000569">
    <property type="protein sequence ID" value="ABN74812.1"/>
    <property type="molecule type" value="Genomic_DNA"/>
</dbReference>
<dbReference type="SMR" id="A3N326"/>
<dbReference type="STRING" id="416269.APL_1728"/>
<dbReference type="EnsemblBacteria" id="ABN74812">
    <property type="protein sequence ID" value="ABN74812"/>
    <property type="gene ID" value="APL_1728"/>
</dbReference>
<dbReference type="KEGG" id="apl:APL_1728"/>
<dbReference type="PATRIC" id="fig|416269.6.peg.1797"/>
<dbReference type="eggNOG" id="COG0086">
    <property type="taxonomic scope" value="Bacteria"/>
</dbReference>
<dbReference type="HOGENOM" id="CLU_000524_3_1_6"/>
<dbReference type="Proteomes" id="UP000001432">
    <property type="component" value="Chromosome"/>
</dbReference>
<dbReference type="GO" id="GO:0000428">
    <property type="term" value="C:DNA-directed RNA polymerase complex"/>
    <property type="evidence" value="ECO:0007669"/>
    <property type="project" value="UniProtKB-KW"/>
</dbReference>
<dbReference type="GO" id="GO:0003677">
    <property type="term" value="F:DNA binding"/>
    <property type="evidence" value="ECO:0007669"/>
    <property type="project" value="UniProtKB-UniRule"/>
</dbReference>
<dbReference type="GO" id="GO:0003899">
    <property type="term" value="F:DNA-directed RNA polymerase activity"/>
    <property type="evidence" value="ECO:0007669"/>
    <property type="project" value="UniProtKB-UniRule"/>
</dbReference>
<dbReference type="GO" id="GO:0000287">
    <property type="term" value="F:magnesium ion binding"/>
    <property type="evidence" value="ECO:0007669"/>
    <property type="project" value="UniProtKB-UniRule"/>
</dbReference>
<dbReference type="GO" id="GO:0008270">
    <property type="term" value="F:zinc ion binding"/>
    <property type="evidence" value="ECO:0007669"/>
    <property type="project" value="UniProtKB-UniRule"/>
</dbReference>
<dbReference type="GO" id="GO:0006351">
    <property type="term" value="P:DNA-templated transcription"/>
    <property type="evidence" value="ECO:0007669"/>
    <property type="project" value="UniProtKB-UniRule"/>
</dbReference>
<dbReference type="CDD" id="cd02655">
    <property type="entry name" value="RNAP_beta'_C"/>
    <property type="match status" value="1"/>
</dbReference>
<dbReference type="CDD" id="cd01609">
    <property type="entry name" value="RNAP_beta'_N"/>
    <property type="match status" value="1"/>
</dbReference>
<dbReference type="FunFam" id="1.10.132.30:FF:000003">
    <property type="entry name" value="DNA-directed RNA polymerase subunit beta"/>
    <property type="match status" value="1"/>
</dbReference>
<dbReference type="FunFam" id="1.10.150.390:FF:000002">
    <property type="entry name" value="DNA-directed RNA polymerase subunit beta"/>
    <property type="match status" value="1"/>
</dbReference>
<dbReference type="FunFam" id="4.10.860.120:FF:000001">
    <property type="entry name" value="DNA-directed RNA polymerase subunit beta"/>
    <property type="match status" value="1"/>
</dbReference>
<dbReference type="Gene3D" id="1.10.132.30">
    <property type="match status" value="1"/>
</dbReference>
<dbReference type="Gene3D" id="1.10.150.390">
    <property type="match status" value="1"/>
</dbReference>
<dbReference type="Gene3D" id="1.10.1790.20">
    <property type="match status" value="1"/>
</dbReference>
<dbReference type="Gene3D" id="1.10.40.90">
    <property type="match status" value="1"/>
</dbReference>
<dbReference type="Gene3D" id="2.40.40.20">
    <property type="match status" value="1"/>
</dbReference>
<dbReference type="Gene3D" id="2.40.50.100">
    <property type="match status" value="3"/>
</dbReference>
<dbReference type="Gene3D" id="4.10.860.120">
    <property type="entry name" value="RNA polymerase II, clamp domain"/>
    <property type="match status" value="1"/>
</dbReference>
<dbReference type="Gene3D" id="1.10.274.100">
    <property type="entry name" value="RNA polymerase Rpb1, domain 3"/>
    <property type="match status" value="1"/>
</dbReference>
<dbReference type="HAMAP" id="MF_01322">
    <property type="entry name" value="RNApol_bact_RpoC"/>
    <property type="match status" value="1"/>
</dbReference>
<dbReference type="InterPro" id="IPR045867">
    <property type="entry name" value="DNA-dir_RpoC_beta_prime"/>
</dbReference>
<dbReference type="InterPro" id="IPR012754">
    <property type="entry name" value="DNA-dir_RpoC_beta_prime_bact"/>
</dbReference>
<dbReference type="InterPro" id="IPR000722">
    <property type="entry name" value="RNA_pol_asu"/>
</dbReference>
<dbReference type="InterPro" id="IPR006592">
    <property type="entry name" value="RNA_pol_N"/>
</dbReference>
<dbReference type="InterPro" id="IPR007080">
    <property type="entry name" value="RNA_pol_Rpb1_1"/>
</dbReference>
<dbReference type="InterPro" id="IPR007066">
    <property type="entry name" value="RNA_pol_Rpb1_3"/>
</dbReference>
<dbReference type="InterPro" id="IPR042102">
    <property type="entry name" value="RNA_pol_Rpb1_3_sf"/>
</dbReference>
<dbReference type="InterPro" id="IPR007083">
    <property type="entry name" value="RNA_pol_Rpb1_4"/>
</dbReference>
<dbReference type="InterPro" id="IPR007081">
    <property type="entry name" value="RNA_pol_Rpb1_5"/>
</dbReference>
<dbReference type="InterPro" id="IPR044893">
    <property type="entry name" value="RNA_pol_Rpb1_clamp_domain"/>
</dbReference>
<dbReference type="InterPro" id="IPR038120">
    <property type="entry name" value="Rpb1_funnel_sf"/>
</dbReference>
<dbReference type="NCBIfam" id="TIGR02386">
    <property type="entry name" value="rpoC_TIGR"/>
    <property type="match status" value="1"/>
</dbReference>
<dbReference type="PANTHER" id="PTHR19376">
    <property type="entry name" value="DNA-DIRECTED RNA POLYMERASE"/>
    <property type="match status" value="1"/>
</dbReference>
<dbReference type="PANTHER" id="PTHR19376:SF54">
    <property type="entry name" value="DNA-DIRECTED RNA POLYMERASE SUBUNIT BETA"/>
    <property type="match status" value="1"/>
</dbReference>
<dbReference type="Pfam" id="PF04997">
    <property type="entry name" value="RNA_pol_Rpb1_1"/>
    <property type="match status" value="1"/>
</dbReference>
<dbReference type="Pfam" id="PF00623">
    <property type="entry name" value="RNA_pol_Rpb1_2"/>
    <property type="match status" value="2"/>
</dbReference>
<dbReference type="Pfam" id="PF04983">
    <property type="entry name" value="RNA_pol_Rpb1_3"/>
    <property type="match status" value="1"/>
</dbReference>
<dbReference type="Pfam" id="PF05000">
    <property type="entry name" value="RNA_pol_Rpb1_4"/>
    <property type="match status" value="1"/>
</dbReference>
<dbReference type="Pfam" id="PF04998">
    <property type="entry name" value="RNA_pol_Rpb1_5"/>
    <property type="match status" value="1"/>
</dbReference>
<dbReference type="SMART" id="SM00663">
    <property type="entry name" value="RPOLA_N"/>
    <property type="match status" value="1"/>
</dbReference>
<dbReference type="SUPFAM" id="SSF64484">
    <property type="entry name" value="beta and beta-prime subunits of DNA dependent RNA-polymerase"/>
    <property type="match status" value="1"/>
</dbReference>
<name>RPOC_ACTP2</name>
<accession>A3N326</accession>
<reference key="1">
    <citation type="journal article" date="2008" name="J. Bacteriol.">
        <title>The complete genome sequence of Actinobacillus pleuropneumoniae L20 (serotype 5b).</title>
        <authorList>
            <person name="Foote S.J."/>
            <person name="Bosse J.T."/>
            <person name="Bouevitch A.B."/>
            <person name="Langford P.R."/>
            <person name="Young N.M."/>
            <person name="Nash J.H.E."/>
        </authorList>
    </citation>
    <scope>NUCLEOTIDE SEQUENCE [LARGE SCALE GENOMIC DNA]</scope>
    <source>
        <strain>L20</strain>
    </source>
</reference>
<keyword id="KW-0240">DNA-directed RNA polymerase</keyword>
<keyword id="KW-0460">Magnesium</keyword>
<keyword id="KW-0479">Metal-binding</keyword>
<keyword id="KW-0548">Nucleotidyltransferase</keyword>
<keyword id="KW-1185">Reference proteome</keyword>
<keyword id="KW-0804">Transcription</keyword>
<keyword id="KW-0808">Transferase</keyword>
<keyword id="KW-0862">Zinc</keyword>
<proteinExistence type="inferred from homology"/>
<evidence type="ECO:0000255" key="1">
    <source>
        <dbReference type="HAMAP-Rule" id="MF_01322"/>
    </source>
</evidence>
<organism>
    <name type="scientific">Actinobacillus pleuropneumoniae serotype 5b (strain L20)</name>
    <dbReference type="NCBI Taxonomy" id="416269"/>
    <lineage>
        <taxon>Bacteria</taxon>
        <taxon>Pseudomonadati</taxon>
        <taxon>Pseudomonadota</taxon>
        <taxon>Gammaproteobacteria</taxon>
        <taxon>Pasteurellales</taxon>
        <taxon>Pasteurellaceae</taxon>
        <taxon>Actinobacillus</taxon>
    </lineage>
</organism>
<gene>
    <name evidence="1" type="primary">rpoC</name>
    <name type="ordered locus">APL_1728</name>
</gene>
<comment type="function">
    <text evidence="1">DNA-dependent RNA polymerase catalyzes the transcription of DNA into RNA using the four ribonucleoside triphosphates as substrates.</text>
</comment>
<comment type="catalytic activity">
    <reaction evidence="1">
        <text>RNA(n) + a ribonucleoside 5'-triphosphate = RNA(n+1) + diphosphate</text>
        <dbReference type="Rhea" id="RHEA:21248"/>
        <dbReference type="Rhea" id="RHEA-COMP:14527"/>
        <dbReference type="Rhea" id="RHEA-COMP:17342"/>
        <dbReference type="ChEBI" id="CHEBI:33019"/>
        <dbReference type="ChEBI" id="CHEBI:61557"/>
        <dbReference type="ChEBI" id="CHEBI:140395"/>
        <dbReference type="EC" id="2.7.7.6"/>
    </reaction>
</comment>
<comment type="cofactor">
    <cofactor evidence="1">
        <name>Mg(2+)</name>
        <dbReference type="ChEBI" id="CHEBI:18420"/>
    </cofactor>
    <text evidence="1">Binds 1 Mg(2+) ion per subunit.</text>
</comment>
<comment type="cofactor">
    <cofactor evidence="1">
        <name>Zn(2+)</name>
        <dbReference type="ChEBI" id="CHEBI:29105"/>
    </cofactor>
    <text evidence="1">Binds 2 Zn(2+) ions per subunit.</text>
</comment>
<comment type="subunit">
    <text evidence="1">The RNAP catalytic core consists of 2 alpha, 1 beta, 1 beta' and 1 omega subunit. When a sigma factor is associated with the core the holoenzyme is formed, which can initiate transcription.</text>
</comment>
<comment type="similarity">
    <text evidence="1">Belongs to the RNA polymerase beta' chain family.</text>
</comment>